<accession>A0A1S4CB73</accession>
<organism>
    <name type="scientific">Nicotiana tabacum</name>
    <name type="common">Common tobacco</name>
    <dbReference type="NCBI Taxonomy" id="4097"/>
    <lineage>
        <taxon>Eukaryota</taxon>
        <taxon>Viridiplantae</taxon>
        <taxon>Streptophyta</taxon>
        <taxon>Embryophyta</taxon>
        <taxon>Tracheophyta</taxon>
        <taxon>Spermatophyta</taxon>
        <taxon>Magnoliopsida</taxon>
        <taxon>eudicotyledons</taxon>
        <taxon>Gunneridae</taxon>
        <taxon>Pentapetalae</taxon>
        <taxon>asterids</taxon>
        <taxon>lamiids</taxon>
        <taxon>Solanales</taxon>
        <taxon>Solanaceae</taxon>
        <taxon>Nicotianoideae</taxon>
        <taxon>Nicotianeae</taxon>
        <taxon>Nicotiana</taxon>
    </lineage>
</organism>
<reference key="1">
    <citation type="journal article" date="2014" name="Nat. Commun.">
        <title>The tobacco genome sequence and its comparison with those of tomato and potato.</title>
        <authorList>
            <person name="Sierro N."/>
            <person name="Battey J.N."/>
            <person name="Ouadi S."/>
            <person name="Bakaher N."/>
            <person name="Bovet L."/>
            <person name="Willig A."/>
            <person name="Goepfert S."/>
            <person name="Peitsch M.C."/>
            <person name="Ivanov N.V."/>
        </authorList>
    </citation>
    <scope>NUCLEOTIDE SEQUENCE [LARGE SCALE GENOMIC DNA]</scope>
    <source>
        <strain>cv. TN90</strain>
    </source>
</reference>
<reference key="2">
    <citation type="journal article" date="2013" name="Phytochemistry">
        <title>Molecular genetics of alkaloid biosynthesis in Nicotiana tabacum.</title>
        <authorList>
            <person name="Dewey R.E."/>
            <person name="Xie J."/>
        </authorList>
    </citation>
    <scope>REVIEW ON ALKALOID BIOSYNTHESIS IN NICOTIANA TABACUM</scope>
</reference>
<reference key="3">
    <citation type="journal article" date="2015" name="Mol. Genet. Genomics">
        <title>Current status and prospects for the study of Nicotiana genomics, genetics, and nicotine biosynthesis genes.</title>
        <authorList>
            <person name="Wang X."/>
            <person name="Bennetzen J.L."/>
        </authorList>
    </citation>
    <scope>REVIEW ON NICOTINE BIOSYNTHESIS</scope>
</reference>
<reference key="4">
    <citation type="journal article" date="2019" name="Food Chem. Toxicol.">
        <title>Antiparasitic properties of leaf extracts derived from selected Nicotiana species and Nicotiana tabacum varieties.</title>
        <authorList>
            <person name="Schorderet Weber S."/>
            <person name="Kaminski K.P."/>
            <person name="Perret J.-L."/>
            <person name="Leroy P."/>
            <person name="Mazurov A."/>
            <person name="Peitsch M.C."/>
            <person name="Ivanov N.V."/>
            <person name="Hoeng J."/>
        </authorList>
    </citation>
    <scope>FUNCTION</scope>
    <scope>PATHWAY</scope>
    <source>
        <strain>cv. Burley Stella</strain>
        <strain>cv. Burley TN90</strain>
        <strain>cv. Virginia ITB 683</strain>
        <strain>cv. Virginia K326</strain>
    </source>
</reference>
<keyword id="KW-0004">4Fe-4S</keyword>
<keyword id="KW-0017">Alkaloid metabolism</keyword>
<keyword id="KW-0150">Chloroplast</keyword>
<keyword id="KW-0408">Iron</keyword>
<keyword id="KW-0411">Iron-sulfur</keyword>
<keyword id="KW-0479">Metal-binding</keyword>
<keyword id="KW-0934">Plastid</keyword>
<keyword id="KW-0662">Pyridine nucleotide biosynthesis</keyword>
<keyword id="KW-1185">Reference proteome</keyword>
<keyword id="KW-0808">Transferase</keyword>
<keyword id="KW-0809">Transit peptide</keyword>
<dbReference type="EC" id="2.5.1.72" evidence="2"/>
<dbReference type="RefSeq" id="XP_016498472.1">
    <property type="nucleotide sequence ID" value="XM_016642986.1"/>
</dbReference>
<dbReference type="SMR" id="A0A1S4CB73"/>
<dbReference type="STRING" id="4097.A0A1S4CB73"/>
<dbReference type="PaxDb" id="4097-A0A1S4CB73"/>
<dbReference type="GeneID" id="107817199"/>
<dbReference type="KEGG" id="nta:107817199"/>
<dbReference type="OMA" id="QELYCDA"/>
<dbReference type="OrthoDB" id="66991at2759"/>
<dbReference type="UniPathway" id="UPA00107"/>
<dbReference type="UniPathway" id="UPA00253">
    <property type="reaction ID" value="UER00327"/>
</dbReference>
<dbReference type="Proteomes" id="UP000084051">
    <property type="component" value="Unplaced"/>
</dbReference>
<dbReference type="GO" id="GO:0009507">
    <property type="term" value="C:chloroplast"/>
    <property type="evidence" value="ECO:0000318"/>
    <property type="project" value="GO_Central"/>
</dbReference>
<dbReference type="GO" id="GO:0051539">
    <property type="term" value="F:4 iron, 4 sulfur cluster binding"/>
    <property type="evidence" value="ECO:0000318"/>
    <property type="project" value="GO_Central"/>
</dbReference>
<dbReference type="GO" id="GO:0046872">
    <property type="term" value="F:metal ion binding"/>
    <property type="evidence" value="ECO:0007669"/>
    <property type="project" value="UniProtKB-KW"/>
</dbReference>
<dbReference type="GO" id="GO:0008987">
    <property type="term" value="F:quinolinate synthetase A activity"/>
    <property type="evidence" value="ECO:0000318"/>
    <property type="project" value="GO_Central"/>
</dbReference>
<dbReference type="GO" id="GO:0034628">
    <property type="term" value="P:'de novo' NAD biosynthetic process from L-aspartate"/>
    <property type="evidence" value="ECO:0000318"/>
    <property type="project" value="GO_Central"/>
</dbReference>
<dbReference type="GO" id="GO:0009820">
    <property type="term" value="P:alkaloid metabolic process"/>
    <property type="evidence" value="ECO:0007669"/>
    <property type="project" value="UniProtKB-KW"/>
</dbReference>
<dbReference type="GO" id="GO:0042179">
    <property type="term" value="P:nicotine biosynthetic process"/>
    <property type="evidence" value="ECO:0007669"/>
    <property type="project" value="UniProtKB-UniPathway"/>
</dbReference>
<dbReference type="FunFam" id="3.40.50.10800:FF:000008">
    <property type="entry name" value="Quinolinate synthase chloroplastic"/>
    <property type="match status" value="1"/>
</dbReference>
<dbReference type="FunFam" id="3.40.50.10800:FF:000006">
    <property type="entry name" value="Quinolinate synthase, chloroplastic"/>
    <property type="match status" value="1"/>
</dbReference>
<dbReference type="Gene3D" id="3.90.1010.10">
    <property type="match status" value="1"/>
</dbReference>
<dbReference type="Gene3D" id="3.40.50.10800">
    <property type="entry name" value="NadA-like"/>
    <property type="match status" value="3"/>
</dbReference>
<dbReference type="InterPro" id="IPR003808">
    <property type="entry name" value="Fe-S_metab-assoc_dom"/>
</dbReference>
<dbReference type="InterPro" id="IPR003473">
    <property type="entry name" value="NadA"/>
</dbReference>
<dbReference type="InterPro" id="IPR036094">
    <property type="entry name" value="NadA_sf"/>
</dbReference>
<dbReference type="PANTHER" id="PTHR30573:SF0">
    <property type="entry name" value="QUINOLINATE SYNTHASE, CHLOROPLASTIC"/>
    <property type="match status" value="1"/>
</dbReference>
<dbReference type="PANTHER" id="PTHR30573">
    <property type="entry name" value="QUINOLINATE SYNTHETASE A"/>
    <property type="match status" value="1"/>
</dbReference>
<dbReference type="Pfam" id="PF02445">
    <property type="entry name" value="NadA"/>
    <property type="match status" value="1"/>
</dbReference>
<dbReference type="Pfam" id="PF02657">
    <property type="entry name" value="SufE"/>
    <property type="match status" value="1"/>
</dbReference>
<dbReference type="SUPFAM" id="SSF142754">
    <property type="entry name" value="NadA-like"/>
    <property type="match status" value="1"/>
</dbReference>
<dbReference type="SUPFAM" id="SSF82649">
    <property type="entry name" value="SufE/NifU"/>
    <property type="match status" value="1"/>
</dbReference>
<proteinExistence type="inferred from homology"/>
<protein>
    <recommendedName>
        <fullName evidence="2">Quinolinate synthase, chloroplastic</fullName>
        <ecNumber evidence="2">2.5.1.72</ecNumber>
    </recommendedName>
</protein>
<sequence>MDAANLVMKSSLFSKSPCPLFSSKLIPRAPPSVFTLPSTFRPLVKCIQASFPPNPDSKKPSNNSTFTCSAVTSFPSQQSQPHAPSDAKLQLLISEFQSLVEPMDRVKRLLHYSTLLPPMDASFKTPENRVPGCTTQVWLNVSFDEAENRMKFLADSDSEITKGFCACLVSLLDGATPDEVLALKTEDLNALNVAGLNGKGSASRANTWHNVLVSMQKRTRALVAEREGRPRGELFPSLVITADGIQPQGSYAEAQARFLFPDESRVQKLASLLKEKKIGVVAHFYMDPEVQGVLTAAQKLWPHIHISDSLVMADKAVSMAKAGCEYISVLGVDFMSENVRAILDLAGFPEVGVYRMSDERIGCSLADAAASPAYLDYLKTASTSSPSLHVVYINTSLETKAYSHELVPTITCTSSNVVQTILQAFAEVPDLEVLYGPDTYMGSNIAELFTQMSTMTDEEISAIHPLHNRISIKSLLPRLHYFQDGTCIVHHLFGHEVVEKINEMYGDAFLTAHFEVPGEMFSLAMEAKKRGMGVVGSTSNILDFIKERVEESLNRNVDEHLQFVLGTESGMITAIVAAVGKLLGSADSSSGGAKVSVEIVFPVSSESVTRTSTGSPLDQNKVNIIPGVASGEGCSLHGGCASCPYMKMNSLSSLLKVCQSLPHGKAELSAYEAGRFSLRTPKGKQIADVGCEPVLHMRHFQATKRLPEQLINQILQPRDNGRSSSA</sequence>
<name>QS2_TOBAC</name>
<comment type="function">
    <text evidence="2 4 5">Involved in the biosynthesis of pyridine alkaloid natural products, leading mainly to the production of anabasine, anatabine, nicotine and nornicotine, effective deterrents against herbivores with antiparasitic and pesticide properties (neurotoxins); nornicotine serves as the precursor in the synthesis of the carcinogen compound N'-nitrosonornicotine (NNN) (PubMed:23953973, PubMed:31276744). Catalyzes the condensation of iminoaspartate with dihydroxyacetone phosphate to form quinolinate (By similarity).</text>
</comment>
<comment type="catalytic activity">
    <reaction evidence="2">
        <text>iminosuccinate + dihydroxyacetone phosphate = quinolinate + phosphate + 2 H2O + H(+)</text>
        <dbReference type="Rhea" id="RHEA:25888"/>
        <dbReference type="ChEBI" id="CHEBI:15377"/>
        <dbReference type="ChEBI" id="CHEBI:15378"/>
        <dbReference type="ChEBI" id="CHEBI:29959"/>
        <dbReference type="ChEBI" id="CHEBI:43474"/>
        <dbReference type="ChEBI" id="CHEBI:57642"/>
        <dbReference type="ChEBI" id="CHEBI:77875"/>
        <dbReference type="EC" id="2.5.1.72"/>
    </reaction>
</comment>
<comment type="cofactor">
    <cofactor evidence="2">
        <name>[4Fe-4S] cluster</name>
        <dbReference type="ChEBI" id="CHEBI:49883"/>
    </cofactor>
    <text evidence="2">Binds 1 [4Fe-4S] cluster per subunit.</text>
</comment>
<comment type="pathway">
    <text evidence="4">Alkaloid biosynthesis; nicotine biosynthesis.</text>
</comment>
<comment type="pathway">
    <text evidence="2">Cofactor biosynthesis; NAD(+) biosynthesis; quinolinate from iminoaspartate: step 1/1.</text>
</comment>
<comment type="subunit">
    <text evidence="2">Homodimer.</text>
</comment>
<comment type="subcellular location">
    <subcellularLocation>
        <location evidence="2">Plastid</location>
        <location evidence="2">Chloroplast</location>
    </subcellularLocation>
</comment>
<comment type="similarity">
    <text evidence="6">Belongs to the quinolinate synthase family. Type 1 subfamily.</text>
</comment>
<gene>
    <name evidence="2" type="primary">QS</name>
    <name evidence="7" type="ORF">LOC107817199</name>
</gene>
<evidence type="ECO:0000250" key="1">
    <source>
        <dbReference type="UniProtKB" id="O57767"/>
    </source>
</evidence>
<evidence type="ECO:0000250" key="2">
    <source>
        <dbReference type="UniProtKB" id="Q9FGS4"/>
    </source>
</evidence>
<evidence type="ECO:0000255" key="3"/>
<evidence type="ECO:0000269" key="4">
    <source>
    </source>
</evidence>
<evidence type="ECO:0000303" key="5">
    <source>
    </source>
</evidence>
<evidence type="ECO:0000305" key="6"/>
<evidence type="ECO:0000312" key="7">
    <source>
        <dbReference type="RefSeq" id="XP_016498472.1"/>
    </source>
</evidence>
<feature type="transit peptide" description="Chloroplast" evidence="3">
    <location>
        <begin position="1"/>
        <end position="67"/>
    </location>
</feature>
<feature type="chain" id="PRO_0000455789" description="Quinolinate synthase, chloroplastic">
    <location>
        <begin position="68"/>
        <end position="726"/>
    </location>
</feature>
<feature type="active site" description="Cysteine persulfide intermediate" evidence="2">
    <location>
        <position position="133"/>
    </location>
</feature>
<feature type="binding site" evidence="1">
    <location>
        <position position="283"/>
    </location>
    <ligand>
        <name>iminosuccinate</name>
        <dbReference type="ChEBI" id="CHEBI:77875"/>
    </ligand>
</feature>
<feature type="binding site" evidence="1">
    <location>
        <position position="309"/>
    </location>
    <ligand>
        <name>iminosuccinate</name>
        <dbReference type="ChEBI" id="CHEBI:77875"/>
    </ligand>
</feature>
<feature type="binding site" evidence="1">
    <location>
        <position position="363"/>
    </location>
    <ligand>
        <name>[4Fe-4S] cluster</name>
        <dbReference type="ChEBI" id="CHEBI:49883"/>
    </ligand>
</feature>
<feature type="binding site" evidence="1">
    <location>
        <begin position="392"/>
        <end position="394"/>
    </location>
    <ligand>
        <name>iminosuccinate</name>
        <dbReference type="ChEBI" id="CHEBI:77875"/>
    </ligand>
</feature>
<feature type="binding site" evidence="1">
    <location>
        <position position="414"/>
    </location>
    <ligand>
        <name>iminosuccinate</name>
        <dbReference type="ChEBI" id="CHEBI:77875"/>
    </ligand>
</feature>
<feature type="binding site" evidence="1">
    <location>
        <position position="487"/>
    </location>
    <ligand>
        <name>[4Fe-4S] cluster</name>
        <dbReference type="ChEBI" id="CHEBI:49883"/>
    </ligand>
</feature>
<feature type="binding site" evidence="1">
    <location>
        <begin position="513"/>
        <end position="515"/>
    </location>
    <ligand>
        <name>iminosuccinate</name>
        <dbReference type="ChEBI" id="CHEBI:77875"/>
    </ligand>
</feature>
<feature type="binding site" evidence="1">
    <location>
        <position position="538"/>
    </location>
    <ligand>
        <name>iminosuccinate</name>
        <dbReference type="ChEBI" id="CHEBI:77875"/>
    </ligand>
</feature>
<feature type="binding site" evidence="1">
    <location>
        <position position="643"/>
    </location>
    <ligand>
        <name>[4Fe-4S] cluster</name>
        <dbReference type="ChEBI" id="CHEBI:49883"/>
    </ligand>
</feature>